<reference key="1">
    <citation type="journal article" date="2005" name="Genome Biol.">
        <title>Full-length cDNAs from chicken bursal lymphocytes to facilitate gene function analysis.</title>
        <authorList>
            <person name="Caldwell R.B."/>
            <person name="Kierzek A.M."/>
            <person name="Arakawa H."/>
            <person name="Bezzubov Y."/>
            <person name="Zaim J."/>
            <person name="Fiedler P."/>
            <person name="Kutter S."/>
            <person name="Blagodatski A."/>
            <person name="Kostovska D."/>
            <person name="Koter M."/>
            <person name="Plachy J."/>
            <person name="Carninci P."/>
            <person name="Hayashizaki Y."/>
            <person name="Buerstedde J.-M."/>
        </authorList>
    </citation>
    <scope>NUCLEOTIDE SEQUENCE [LARGE SCALE MRNA]</scope>
    <source>
        <strain>CB</strain>
        <tissue>Bursa of Fabricius</tissue>
    </source>
</reference>
<name>TSN12_CHICK</name>
<feature type="chain" id="PRO_0000294075" description="Tetraspanin-12">
    <location>
        <begin position="1"/>
        <end position="305"/>
    </location>
</feature>
<feature type="topological domain" description="Cytoplasmic" evidence="2">
    <location>
        <begin position="1"/>
        <end position="12"/>
    </location>
</feature>
<feature type="transmembrane region" description="Helical" evidence="2">
    <location>
        <begin position="13"/>
        <end position="33"/>
    </location>
</feature>
<feature type="topological domain" description="Extracellular" evidence="2">
    <location>
        <begin position="34"/>
        <end position="59"/>
    </location>
</feature>
<feature type="transmembrane region" description="Helical" evidence="2">
    <location>
        <begin position="60"/>
        <end position="80"/>
    </location>
</feature>
<feature type="topological domain" description="Cytoplasmic" evidence="2">
    <location>
        <begin position="81"/>
        <end position="89"/>
    </location>
</feature>
<feature type="transmembrane region" description="Helical" evidence="2">
    <location>
        <begin position="90"/>
        <end position="110"/>
    </location>
</feature>
<feature type="topological domain" description="Extracellular" evidence="2">
    <location>
        <begin position="111"/>
        <end position="224"/>
    </location>
</feature>
<feature type="transmembrane region" description="Helical" evidence="2">
    <location>
        <begin position="225"/>
        <end position="245"/>
    </location>
</feature>
<feature type="topological domain" description="Cytoplasmic" evidence="2">
    <location>
        <begin position="246"/>
        <end position="305"/>
    </location>
</feature>
<feature type="lipid moiety-binding region" description="S-palmitoyl cysteine" evidence="1">
    <location>
        <position position="9"/>
    </location>
</feature>
<feature type="lipid moiety-binding region" description="S-palmitoyl cysteine" evidence="1">
    <location>
        <position position="12"/>
    </location>
</feature>
<feature type="lipid moiety-binding region" description="S-palmitoyl cysteine" evidence="1">
    <location>
        <position position="83"/>
    </location>
</feature>
<gene>
    <name type="primary">TSPAN12</name>
    <name type="ORF">RCJMB04_27b23</name>
</gene>
<proteinExistence type="evidence at transcript level"/>
<protein>
    <recommendedName>
        <fullName>Tetraspanin-12</fullName>
        <shortName>Tspan-12</shortName>
    </recommendedName>
</protein>
<evidence type="ECO:0000250" key="1"/>
<evidence type="ECO:0000255" key="2"/>
<evidence type="ECO:0000305" key="3"/>
<comment type="function">
    <text evidence="1">Regulator of cell surface receptor signal transduction. Plays a central role in retinal vascularization by regulating norrin (NDP) signal transduction. Acts in concert with norrin (NDP) to promote FZD4 multimerization and subsequent activation of FZD4, leading to promote accumulation of beta-catenin (CTNNB1) and stimulate LEF/TCF-mediated transcriptional programs. Suprisingly, it only activates the norrin (NDP)-dependent activation of FZD4, while it does not activate the Wnt-dependent activation of FZD4, suggesting the existence of a Wnt-independent signaling that also promote accumulation the beta-catenin (CTNNB1) (By similarity).</text>
</comment>
<comment type="subunit">
    <text evidence="1">Component of a complex, at least composed of TSPAN12, FZD4 and norrin (NDP).</text>
</comment>
<comment type="subcellular location">
    <subcellularLocation>
        <location evidence="1">Cell membrane</location>
        <topology evidence="1">Multi-pass membrane protein</topology>
    </subcellularLocation>
</comment>
<comment type="PTM">
    <text evidence="1">Palmitoylated; required for interaction with ADAM10. The precise position of palmitoylated residues is unclear and occurs either on Cys-9, Cys-12 and/or Cys-83 (By similarity).</text>
</comment>
<comment type="similarity">
    <text evidence="3">Belongs to the tetraspanin (TM4SF) family.</text>
</comment>
<accession>Q5ZIF5</accession>
<dbReference type="EMBL" id="AJ720829">
    <property type="protein sequence ID" value="CAG32488.1"/>
    <property type="molecule type" value="mRNA"/>
</dbReference>
<dbReference type="RefSeq" id="NP_001007850.1">
    <property type="nucleotide sequence ID" value="NM_001007849.2"/>
</dbReference>
<dbReference type="RefSeq" id="NP_001383945.1">
    <property type="nucleotide sequence ID" value="NM_001397016.1"/>
</dbReference>
<dbReference type="RefSeq" id="XP_015136498.1">
    <property type="nucleotide sequence ID" value="XM_015281012.1"/>
</dbReference>
<dbReference type="RefSeq" id="XP_015136504.1">
    <property type="nucleotide sequence ID" value="XM_015281018.1"/>
</dbReference>
<dbReference type="FunCoup" id="Q5ZIF5">
    <property type="interactions" value="3"/>
</dbReference>
<dbReference type="STRING" id="9031.ENSGALP00000014674"/>
<dbReference type="PaxDb" id="9031-ENSGALP00000014674"/>
<dbReference type="Ensembl" id="ENSGALT00010002854.1">
    <property type="protein sequence ID" value="ENSGALP00010001404.1"/>
    <property type="gene ID" value="ENSGALG00010001232.1"/>
</dbReference>
<dbReference type="GeneID" id="417763"/>
<dbReference type="KEGG" id="gga:417763"/>
<dbReference type="CTD" id="23554"/>
<dbReference type="VEuPathDB" id="HostDB:geneid_417763"/>
<dbReference type="eggNOG" id="KOG3882">
    <property type="taxonomic scope" value="Eukaryota"/>
</dbReference>
<dbReference type="GeneTree" id="ENSGT00510000047764"/>
<dbReference type="HOGENOM" id="CLU_055524_1_0_1"/>
<dbReference type="InParanoid" id="Q5ZIF5"/>
<dbReference type="OMA" id="CARHAHF"/>
<dbReference type="OrthoDB" id="8813994at2759"/>
<dbReference type="PhylomeDB" id="Q5ZIF5"/>
<dbReference type="TreeFam" id="TF316345"/>
<dbReference type="PRO" id="PR:Q5ZIF5"/>
<dbReference type="Proteomes" id="UP000000539">
    <property type="component" value="Chromosome 1"/>
</dbReference>
<dbReference type="Bgee" id="ENSGALG00000009029">
    <property type="expression patterns" value="Expressed in liver and 14 other cell types or tissues"/>
</dbReference>
<dbReference type="GO" id="GO:0005886">
    <property type="term" value="C:plasma membrane"/>
    <property type="evidence" value="ECO:0000250"/>
    <property type="project" value="UniProtKB"/>
</dbReference>
<dbReference type="GO" id="GO:0001525">
    <property type="term" value="P:angiogenesis"/>
    <property type="evidence" value="ECO:0007669"/>
    <property type="project" value="UniProtKB-KW"/>
</dbReference>
<dbReference type="GO" id="GO:0007166">
    <property type="term" value="P:cell surface receptor signaling pathway"/>
    <property type="evidence" value="ECO:0000250"/>
    <property type="project" value="UniProtKB"/>
</dbReference>
<dbReference type="GO" id="GO:0045765">
    <property type="term" value="P:regulation of angiogenesis"/>
    <property type="evidence" value="ECO:0000250"/>
    <property type="project" value="UniProtKB"/>
</dbReference>
<dbReference type="GO" id="GO:0010842">
    <property type="term" value="P:retina layer formation"/>
    <property type="evidence" value="ECO:0000250"/>
    <property type="project" value="UniProtKB"/>
</dbReference>
<dbReference type="CDD" id="cd03157">
    <property type="entry name" value="TM4SF12_like_LEL"/>
    <property type="match status" value="1"/>
</dbReference>
<dbReference type="FunFam" id="1.10.1450.10:FF:000009">
    <property type="entry name" value="Tetraspanin"/>
    <property type="match status" value="1"/>
</dbReference>
<dbReference type="Gene3D" id="1.10.1450.10">
    <property type="entry name" value="Tetraspanin"/>
    <property type="match status" value="1"/>
</dbReference>
<dbReference type="InterPro" id="IPR018499">
    <property type="entry name" value="Tetraspanin/Peripherin"/>
</dbReference>
<dbReference type="InterPro" id="IPR000301">
    <property type="entry name" value="Tetraspanin_animals"/>
</dbReference>
<dbReference type="InterPro" id="IPR018503">
    <property type="entry name" value="Tetraspanin_CS"/>
</dbReference>
<dbReference type="InterPro" id="IPR008952">
    <property type="entry name" value="Tetraspanin_EC2_sf"/>
</dbReference>
<dbReference type="PANTHER" id="PTHR19282">
    <property type="entry name" value="TETRASPANIN"/>
    <property type="match status" value="1"/>
</dbReference>
<dbReference type="PANTHER" id="PTHR19282:SF462">
    <property type="entry name" value="TETRASPANIN-12"/>
    <property type="match status" value="1"/>
</dbReference>
<dbReference type="Pfam" id="PF00335">
    <property type="entry name" value="Tetraspanin"/>
    <property type="match status" value="1"/>
</dbReference>
<dbReference type="PIRSF" id="PIRSF002419">
    <property type="entry name" value="Tetraspanin"/>
    <property type="match status" value="1"/>
</dbReference>
<dbReference type="PRINTS" id="PR00259">
    <property type="entry name" value="TMFOUR"/>
</dbReference>
<dbReference type="SUPFAM" id="SSF48652">
    <property type="entry name" value="Tetraspanin"/>
    <property type="match status" value="1"/>
</dbReference>
<dbReference type="PROSITE" id="PS00421">
    <property type="entry name" value="TM4_1"/>
    <property type="match status" value="1"/>
</dbReference>
<keyword id="KW-0037">Angiogenesis</keyword>
<keyword id="KW-1003">Cell membrane</keyword>
<keyword id="KW-0449">Lipoprotein</keyword>
<keyword id="KW-0472">Membrane</keyword>
<keyword id="KW-0564">Palmitate</keyword>
<keyword id="KW-1185">Reference proteome</keyword>
<keyword id="KW-0812">Transmembrane</keyword>
<keyword id="KW-1133">Transmembrane helix</keyword>
<sequence length="305" mass="35256">MAREDSVRCLRCLLYALNLLFWLMSISVLGVSAWIRDYLNNVLTLTAETRVEEAVILTYFPVVHPVMIAVCCFLILVGMLGYCGTVKRNLLLLVWYFGSLLVIFCVELACGVWTYEQEITVPVQWSDMITLKARMTNYGLPRYQWLTHAWNFFQREFKCCGVVYFTDWLEMTEMDWPPDSCCVREFPGCSKQAHHEDLSDLYQEGCGKKMYTFLRGTKQLQVLRFLGISIGVTQILAMILTITLLWALYYDRRDPGADQIMSLKNDTSQQLSCHSVELLKPSLTGIFEHTSMANSFNTHFEMEEL</sequence>
<organism>
    <name type="scientific">Gallus gallus</name>
    <name type="common">Chicken</name>
    <dbReference type="NCBI Taxonomy" id="9031"/>
    <lineage>
        <taxon>Eukaryota</taxon>
        <taxon>Metazoa</taxon>
        <taxon>Chordata</taxon>
        <taxon>Craniata</taxon>
        <taxon>Vertebrata</taxon>
        <taxon>Euteleostomi</taxon>
        <taxon>Archelosauria</taxon>
        <taxon>Archosauria</taxon>
        <taxon>Dinosauria</taxon>
        <taxon>Saurischia</taxon>
        <taxon>Theropoda</taxon>
        <taxon>Coelurosauria</taxon>
        <taxon>Aves</taxon>
        <taxon>Neognathae</taxon>
        <taxon>Galloanserae</taxon>
        <taxon>Galliformes</taxon>
        <taxon>Phasianidae</taxon>
        <taxon>Phasianinae</taxon>
        <taxon>Gallus</taxon>
    </lineage>
</organism>